<reference key="1">
    <citation type="journal article" date="2005" name="Genome Res.">
        <title>Coping with cold: the genome of the versatile marine Antarctica bacterium Pseudoalteromonas haloplanktis TAC125.</title>
        <authorList>
            <person name="Medigue C."/>
            <person name="Krin E."/>
            <person name="Pascal G."/>
            <person name="Barbe V."/>
            <person name="Bernsel A."/>
            <person name="Bertin P.N."/>
            <person name="Cheung F."/>
            <person name="Cruveiller S."/>
            <person name="D'Amico S."/>
            <person name="Duilio A."/>
            <person name="Fang G."/>
            <person name="Feller G."/>
            <person name="Ho C."/>
            <person name="Mangenot S."/>
            <person name="Marino G."/>
            <person name="Nilsson J."/>
            <person name="Parrilli E."/>
            <person name="Rocha E.P.C."/>
            <person name="Rouy Z."/>
            <person name="Sekowska A."/>
            <person name="Tutino M.L."/>
            <person name="Vallenet D."/>
            <person name="von Heijne G."/>
            <person name="Danchin A."/>
        </authorList>
    </citation>
    <scope>NUCLEOTIDE SEQUENCE [LARGE SCALE GENOMIC DNA]</scope>
    <source>
        <strain>TAC 125</strain>
    </source>
</reference>
<organism>
    <name type="scientific">Pseudoalteromonas translucida (strain TAC 125)</name>
    <dbReference type="NCBI Taxonomy" id="326442"/>
    <lineage>
        <taxon>Bacteria</taxon>
        <taxon>Pseudomonadati</taxon>
        <taxon>Pseudomonadota</taxon>
        <taxon>Gammaproteobacteria</taxon>
        <taxon>Alteromonadales</taxon>
        <taxon>Pseudoalteromonadaceae</taxon>
        <taxon>Pseudoalteromonas</taxon>
    </lineage>
</organism>
<dbReference type="EMBL" id="CR954247">
    <property type="protein sequence ID" value="CAI89421.1"/>
    <property type="molecule type" value="Genomic_DNA"/>
</dbReference>
<dbReference type="SMR" id="Q3IC33"/>
<dbReference type="STRING" id="326442.PSHAb0382"/>
<dbReference type="KEGG" id="pha:PSHAb0382"/>
<dbReference type="PATRIC" id="fig|326442.8.peg.3291"/>
<dbReference type="eggNOG" id="COG0257">
    <property type="taxonomic scope" value="Bacteria"/>
</dbReference>
<dbReference type="HOGENOM" id="CLU_135723_3_1_6"/>
<dbReference type="BioCyc" id="PHAL326442:PSHA_RS16695-MONOMER"/>
<dbReference type="Proteomes" id="UP000006843">
    <property type="component" value="Chromosome II"/>
</dbReference>
<dbReference type="GO" id="GO:1990904">
    <property type="term" value="C:ribonucleoprotein complex"/>
    <property type="evidence" value="ECO:0007669"/>
    <property type="project" value="UniProtKB-KW"/>
</dbReference>
<dbReference type="GO" id="GO:0005840">
    <property type="term" value="C:ribosome"/>
    <property type="evidence" value="ECO:0007669"/>
    <property type="project" value="UniProtKB-KW"/>
</dbReference>
<dbReference type="GO" id="GO:0003735">
    <property type="term" value="F:structural constituent of ribosome"/>
    <property type="evidence" value="ECO:0007669"/>
    <property type="project" value="InterPro"/>
</dbReference>
<dbReference type="GO" id="GO:0006412">
    <property type="term" value="P:translation"/>
    <property type="evidence" value="ECO:0007669"/>
    <property type="project" value="UniProtKB-UniRule"/>
</dbReference>
<dbReference type="HAMAP" id="MF_00251">
    <property type="entry name" value="Ribosomal_bL36"/>
    <property type="match status" value="1"/>
</dbReference>
<dbReference type="InterPro" id="IPR000473">
    <property type="entry name" value="Ribosomal_bL36"/>
</dbReference>
<dbReference type="InterPro" id="IPR035977">
    <property type="entry name" value="Ribosomal_bL36_sp"/>
</dbReference>
<dbReference type="InterPro" id="IPR047621">
    <property type="entry name" value="Ribosomal_L36_bact"/>
</dbReference>
<dbReference type="NCBIfam" id="NF002021">
    <property type="entry name" value="PRK00831.1"/>
    <property type="match status" value="1"/>
</dbReference>
<dbReference type="NCBIfam" id="TIGR01022">
    <property type="entry name" value="rpmJ_bact"/>
    <property type="match status" value="1"/>
</dbReference>
<dbReference type="PANTHER" id="PTHR47781">
    <property type="entry name" value="50S RIBOSOMAL PROTEIN L36 2"/>
    <property type="match status" value="1"/>
</dbReference>
<dbReference type="PANTHER" id="PTHR47781:SF1">
    <property type="entry name" value="LARGE RIBOSOMAL SUBUNIT PROTEIN BL36B"/>
    <property type="match status" value="1"/>
</dbReference>
<dbReference type="Pfam" id="PF00444">
    <property type="entry name" value="Ribosomal_L36"/>
    <property type="match status" value="1"/>
</dbReference>
<dbReference type="SUPFAM" id="SSF57840">
    <property type="entry name" value="Ribosomal protein L36"/>
    <property type="match status" value="1"/>
</dbReference>
<protein>
    <recommendedName>
        <fullName evidence="1">Large ribosomal subunit protein bL36</fullName>
    </recommendedName>
    <alternativeName>
        <fullName evidence="2">50S ribosomal protein L36</fullName>
    </alternativeName>
</protein>
<feature type="chain" id="PRO_0000302270" description="Large ribosomal subunit protein bL36">
    <location>
        <begin position="1"/>
        <end position="44"/>
    </location>
</feature>
<accession>Q3IC33</accession>
<comment type="similarity">
    <text evidence="1">Belongs to the bacterial ribosomal protein bL36 family.</text>
</comment>
<keyword id="KW-1185">Reference proteome</keyword>
<keyword id="KW-0687">Ribonucleoprotein</keyword>
<keyword id="KW-0689">Ribosomal protein</keyword>
<proteinExistence type="inferred from homology"/>
<name>RL36_PSET1</name>
<evidence type="ECO:0000255" key="1">
    <source>
        <dbReference type="HAMAP-Rule" id="MF_00251"/>
    </source>
</evidence>
<evidence type="ECO:0000305" key="2"/>
<gene>
    <name evidence="1" type="primary">rpmJ</name>
    <name type="ordered locus">PSHAb0382</name>
</gene>
<sequence>MKVLSSLKSAKQRAGCQVVKRKGRVFVICKENPRFKAVQGMKKK</sequence>